<comment type="function">
    <text evidence="1">ATPase required for the post-translational delivery of tail-anchored (TA) proteins to the endoplasmic reticulum. Recognizes and selectively binds the transmembrane domain of TA proteins in the cytosol. This complex then targets to the endoplasmic reticulum by membrane-bound receptors GET1 and GET2, where the tail-anchored protein is released for insertion. This process is regulated by ATP binding and hydrolysis. ATP binding drives the homodimer towards the closed dimer state, facilitating recognition of newly synthesized TA membrane proteins. ATP hydrolysis is required for insertion. Subsequently, the homodimer reverts towards the open dimer state, lowering its affinity for the GET1-GET2 receptor, and returning it to the cytosol to initiate a new round of targeting. Cooperates with the HDEL receptor ERD2 to mediate the ATP-dependent retrieval of resident ER proteins that contain a C-terminal H-D-E-L retention signal from the Golgi to the ER. Involved in low-level resistance to the oxyanions arsenite and arsenate, and in heat tolerance.</text>
</comment>
<comment type="subunit">
    <text evidence="1">Homodimer. Component of the Golgi to ER traffic (GET) complex, which is composed of GET1, GET2 and GET3. Within the complex, GET1 and GET2 form a heterotetramer which is stabilized by phosphatidylinositol binding and which binds to the GET3 homodimer. Interacts with the chloride channel protein GEF1.</text>
</comment>
<comment type="subcellular location">
    <subcellularLocation>
        <location evidence="1">Cytoplasm</location>
    </subcellularLocation>
    <subcellularLocation>
        <location evidence="1">Endoplasmic reticulum</location>
    </subcellularLocation>
    <subcellularLocation>
        <location evidence="1">Golgi apparatus</location>
    </subcellularLocation>
    <text evidence="1">GET1 and GET2 are required for targeting GET3 to the endoplasmic reticulum.</text>
</comment>
<comment type="similarity">
    <text evidence="1">Belongs to the arsA ATPase family.</text>
</comment>
<keyword id="KW-0067">ATP-binding</keyword>
<keyword id="KW-0963">Cytoplasm</keyword>
<keyword id="KW-0256">Endoplasmic reticulum</keyword>
<keyword id="KW-0333">Golgi apparatus</keyword>
<keyword id="KW-0378">Hydrolase</keyword>
<keyword id="KW-0479">Metal-binding</keyword>
<keyword id="KW-0547">Nucleotide-binding</keyword>
<keyword id="KW-0813">Transport</keyword>
<keyword id="KW-0862">Zinc</keyword>
<organism>
    <name type="scientific">Candida albicans (strain WO-1)</name>
    <name type="common">Yeast</name>
    <dbReference type="NCBI Taxonomy" id="294748"/>
    <lineage>
        <taxon>Eukaryota</taxon>
        <taxon>Fungi</taxon>
        <taxon>Dikarya</taxon>
        <taxon>Ascomycota</taxon>
        <taxon>Saccharomycotina</taxon>
        <taxon>Pichiomycetes</taxon>
        <taxon>Debaryomycetaceae</taxon>
        <taxon>Candida/Lodderomyces clade</taxon>
        <taxon>Candida</taxon>
    </lineage>
</organism>
<evidence type="ECO:0000255" key="1">
    <source>
        <dbReference type="HAMAP-Rule" id="MF_03112"/>
    </source>
</evidence>
<feature type="chain" id="PRO_0000388195" description="ATPase GET3">
    <location>
        <begin position="1"/>
        <end position="350"/>
    </location>
</feature>
<feature type="active site" evidence="1">
    <location>
        <position position="57"/>
    </location>
</feature>
<feature type="binding site" evidence="1">
    <location>
        <begin position="26"/>
        <end position="33"/>
    </location>
    <ligand>
        <name>ATP</name>
        <dbReference type="ChEBI" id="CHEBI:30616"/>
    </ligand>
</feature>
<feature type="binding site" evidence="1">
    <location>
        <position position="243"/>
    </location>
    <ligand>
        <name>ATP</name>
        <dbReference type="ChEBI" id="CHEBI:30616"/>
    </ligand>
</feature>
<feature type="binding site" evidence="1">
    <location>
        <position position="270"/>
    </location>
    <ligand>
        <name>ATP</name>
        <dbReference type="ChEBI" id="CHEBI:30616"/>
    </ligand>
</feature>
<feature type="binding site" evidence="1">
    <location>
        <position position="282"/>
    </location>
    <ligand>
        <name>Zn(2+)</name>
        <dbReference type="ChEBI" id="CHEBI:29105"/>
        <note>ligand shared between dimeric partners</note>
    </ligand>
</feature>
<feature type="binding site" evidence="1">
    <location>
        <position position="285"/>
    </location>
    <ligand>
        <name>Zn(2+)</name>
        <dbReference type="ChEBI" id="CHEBI:29105"/>
        <note>ligand shared between dimeric partners</note>
    </ligand>
</feature>
<sequence>MDFELEPSLEELIKQDTLKWIFVGGKGGVGKTTTSSSIAVQLALQHPNDEFLLISTDPAHNLSDAFCQKFGKDARKVEGLSNLSCMEIDPEAAMSDLQQQAQQYNNDPNDPLKSIMNDMTGSIPGIDEALSFMEVLKHIKNQKVNESDDSKDKISYRTIIFDTAPTGHTLRFLQLPSTLQKLLGKFQQLSGKLGPMMSMLGGGGQGQQDMFAKLNEVQKNVEEVNEQFTNPDLTTFVCVCISEFLSLYETERMIQELMSYQMDVNSIVVNQLLFADDDENPCKRCVARWKMQKKYLDQMAELYEDYHLVKMPLLGSEIRGVENLKKFSKFLIKPYDPKVDRGIITDLKEQ</sequence>
<dbReference type="EC" id="3.6.-.-" evidence="1"/>
<dbReference type="EMBL" id="CH672346">
    <property type="protein sequence ID" value="EEQ42884.1"/>
    <property type="molecule type" value="Genomic_DNA"/>
</dbReference>
<dbReference type="SMR" id="P0CB55"/>
<dbReference type="PaxDb" id="5476-P0CB55"/>
<dbReference type="VEuPathDB" id="FungiDB:CAWG_01107"/>
<dbReference type="HOGENOM" id="CLU_040761_0_0_1"/>
<dbReference type="OMA" id="MDAPYEF"/>
<dbReference type="OrthoDB" id="7297at766764"/>
<dbReference type="Proteomes" id="UP000001429">
    <property type="component" value="Chromosome 1, Supercontig 1.1"/>
</dbReference>
<dbReference type="GO" id="GO:0043529">
    <property type="term" value="C:GET complex"/>
    <property type="evidence" value="ECO:0007669"/>
    <property type="project" value="TreeGrafter"/>
</dbReference>
<dbReference type="GO" id="GO:0005794">
    <property type="term" value="C:Golgi apparatus"/>
    <property type="evidence" value="ECO:0007669"/>
    <property type="project" value="UniProtKB-SubCell"/>
</dbReference>
<dbReference type="GO" id="GO:0005524">
    <property type="term" value="F:ATP binding"/>
    <property type="evidence" value="ECO:0007669"/>
    <property type="project" value="UniProtKB-UniRule"/>
</dbReference>
<dbReference type="GO" id="GO:0016887">
    <property type="term" value="F:ATP hydrolysis activity"/>
    <property type="evidence" value="ECO:0007669"/>
    <property type="project" value="InterPro"/>
</dbReference>
<dbReference type="GO" id="GO:0046872">
    <property type="term" value="F:metal ion binding"/>
    <property type="evidence" value="ECO:0007669"/>
    <property type="project" value="UniProtKB-KW"/>
</dbReference>
<dbReference type="GO" id="GO:0071816">
    <property type="term" value="P:tail-anchored membrane protein insertion into ER membrane"/>
    <property type="evidence" value="ECO:0007669"/>
    <property type="project" value="TreeGrafter"/>
</dbReference>
<dbReference type="CDD" id="cd02035">
    <property type="entry name" value="ArsA"/>
    <property type="match status" value="1"/>
</dbReference>
<dbReference type="FunFam" id="3.40.50.300:FF:001359">
    <property type="entry name" value="ATPase GET3"/>
    <property type="match status" value="1"/>
</dbReference>
<dbReference type="Gene3D" id="3.40.50.300">
    <property type="entry name" value="P-loop containing nucleotide triphosphate hydrolases"/>
    <property type="match status" value="1"/>
</dbReference>
<dbReference type="HAMAP" id="MF_03112">
    <property type="entry name" value="Asna1_Get3"/>
    <property type="match status" value="1"/>
</dbReference>
<dbReference type="InterPro" id="IPR025723">
    <property type="entry name" value="Anion-transp_ATPase-like_dom"/>
</dbReference>
<dbReference type="InterPro" id="IPR016300">
    <property type="entry name" value="ATPase_ArsA/GET3"/>
</dbReference>
<dbReference type="InterPro" id="IPR027542">
    <property type="entry name" value="ATPase_ArsA/GET3_euk"/>
</dbReference>
<dbReference type="InterPro" id="IPR027417">
    <property type="entry name" value="P-loop_NTPase"/>
</dbReference>
<dbReference type="NCBIfam" id="TIGR00345">
    <property type="entry name" value="GET3_arsA_TRC40"/>
    <property type="match status" value="1"/>
</dbReference>
<dbReference type="PANTHER" id="PTHR10803">
    <property type="entry name" value="ARSENICAL PUMP-DRIVING ATPASE ARSENITE-TRANSLOCATING ATPASE"/>
    <property type="match status" value="1"/>
</dbReference>
<dbReference type="PANTHER" id="PTHR10803:SF3">
    <property type="entry name" value="ATPASE GET3"/>
    <property type="match status" value="1"/>
</dbReference>
<dbReference type="Pfam" id="PF02374">
    <property type="entry name" value="ArsA_ATPase"/>
    <property type="match status" value="1"/>
</dbReference>
<dbReference type="SUPFAM" id="SSF52540">
    <property type="entry name" value="P-loop containing nucleoside triphosphate hydrolases"/>
    <property type="match status" value="1"/>
</dbReference>
<accession>P0CB55</accession>
<accession>Q5AI88</accession>
<protein>
    <recommendedName>
        <fullName evidence="1">ATPase GET3</fullName>
        <ecNumber evidence="1">3.6.-.-</ecNumber>
    </recommendedName>
    <alternativeName>
        <fullName evidence="1">Arsenical pump-driving ATPase</fullName>
    </alternativeName>
    <alternativeName>
        <fullName evidence="1">Arsenite-stimulated ATPase</fullName>
    </alternativeName>
    <alternativeName>
        <fullName evidence="1">Golgi to ER traffic protein 3</fullName>
    </alternativeName>
    <alternativeName>
        <fullName evidence="1">Guided entry of tail-anchored proteins 3</fullName>
    </alternativeName>
</protein>
<name>GET3_CANAW</name>
<gene>
    <name evidence="1" type="primary">GET3</name>
    <name type="ORF">CAWG_01107</name>
</gene>
<proteinExistence type="inferred from homology"/>
<reference key="1">
    <citation type="journal article" date="2009" name="Nature">
        <title>Evolution of pathogenicity and sexual reproduction in eight Candida genomes.</title>
        <authorList>
            <person name="Butler G."/>
            <person name="Rasmussen M.D."/>
            <person name="Lin M.F."/>
            <person name="Santos M.A.S."/>
            <person name="Sakthikumar S."/>
            <person name="Munro C.A."/>
            <person name="Rheinbay E."/>
            <person name="Grabherr M."/>
            <person name="Forche A."/>
            <person name="Reedy J.L."/>
            <person name="Agrafioti I."/>
            <person name="Arnaud M.B."/>
            <person name="Bates S."/>
            <person name="Brown A.J.P."/>
            <person name="Brunke S."/>
            <person name="Costanzo M.C."/>
            <person name="Fitzpatrick D.A."/>
            <person name="de Groot P.W.J."/>
            <person name="Harris D."/>
            <person name="Hoyer L.L."/>
            <person name="Hube B."/>
            <person name="Klis F.M."/>
            <person name="Kodira C."/>
            <person name="Lennard N."/>
            <person name="Logue M.E."/>
            <person name="Martin R."/>
            <person name="Neiman A.M."/>
            <person name="Nikolaou E."/>
            <person name="Quail M.A."/>
            <person name="Quinn J."/>
            <person name="Santos M.C."/>
            <person name="Schmitzberger F.F."/>
            <person name="Sherlock G."/>
            <person name="Shah P."/>
            <person name="Silverstein K.A.T."/>
            <person name="Skrzypek M.S."/>
            <person name="Soll D."/>
            <person name="Staggs R."/>
            <person name="Stansfield I."/>
            <person name="Stumpf M.P.H."/>
            <person name="Sudbery P.E."/>
            <person name="Srikantha T."/>
            <person name="Zeng Q."/>
            <person name="Berman J."/>
            <person name="Berriman M."/>
            <person name="Heitman J."/>
            <person name="Gow N.A.R."/>
            <person name="Lorenz M.C."/>
            <person name="Birren B.W."/>
            <person name="Kellis M."/>
            <person name="Cuomo C.A."/>
        </authorList>
    </citation>
    <scope>NUCLEOTIDE SEQUENCE [LARGE SCALE GENOMIC DNA]</scope>
    <source>
        <strain>WO-1</strain>
    </source>
</reference>